<comment type="subunit">
    <text evidence="1">Component of the small ribosomal subunit.</text>
</comment>
<comment type="subcellular location">
    <subcellularLocation>
        <location evidence="1">Cytoplasm</location>
    </subcellularLocation>
</comment>
<comment type="developmental stage">
    <text evidence="2">Expressed in late sporogonial stages.</text>
</comment>
<comment type="similarity">
    <text evidence="3">Belongs to the eukaryotic ribosomal protein eS19 family.</text>
</comment>
<evidence type="ECO:0000250" key="1"/>
<evidence type="ECO:0000269" key="2">
    <source>
    </source>
</evidence>
<evidence type="ECO:0000305" key="3"/>
<reference key="1">
    <citation type="journal article" date="2001" name="Nature">
        <title>Genome sequence and gene compaction of the eukaryote parasite Encephalitozoon cuniculi.</title>
        <authorList>
            <person name="Katinka M.D."/>
            <person name="Duprat S."/>
            <person name="Cornillot E."/>
            <person name="Metenier G."/>
            <person name="Thomarat F."/>
            <person name="Prensier G."/>
            <person name="Barbe V."/>
            <person name="Peyretaillade E."/>
            <person name="Brottier P."/>
            <person name="Wincker P."/>
            <person name="Delbac F."/>
            <person name="El Alaoui H."/>
            <person name="Peyret P."/>
            <person name="Saurin W."/>
            <person name="Gouy M."/>
            <person name="Weissenbach J."/>
            <person name="Vivares C.P."/>
        </authorList>
    </citation>
    <scope>NUCLEOTIDE SEQUENCE [LARGE SCALE GENOMIC DNA]</scope>
    <source>
        <strain>GB-M1</strain>
    </source>
</reference>
<reference key="2">
    <citation type="journal article" date="2006" name="Proteomics">
        <title>Proteomic analysis of the eukaryotic parasite Encephalitozoon cuniculi (microsporidia): a reference map for proteins expressed in late sporogonial stages.</title>
        <authorList>
            <person name="Brosson D."/>
            <person name="Kuhn L."/>
            <person name="Delbac F."/>
            <person name="Garin J."/>
            <person name="Vivares C.P."/>
            <person name="Texier C."/>
        </authorList>
    </citation>
    <scope>IDENTIFICATION BY MASS SPECTROMETRY [LARGE SCALE ANALYSIS]</scope>
    <scope>DEVELOPMENTAL STAGE</scope>
</reference>
<organism>
    <name type="scientific">Encephalitozoon cuniculi (strain GB-M1)</name>
    <name type="common">Microsporidian parasite</name>
    <dbReference type="NCBI Taxonomy" id="284813"/>
    <lineage>
        <taxon>Eukaryota</taxon>
        <taxon>Fungi</taxon>
        <taxon>Fungi incertae sedis</taxon>
        <taxon>Microsporidia</taxon>
        <taxon>Unikaryonidae</taxon>
        <taxon>Encephalitozoon</taxon>
    </lineage>
</organism>
<sequence>MIEGIYEVMPEKFNEALKSYLKSTNEVVPLQDHDIMKTGEGREQAPIEEDWYFTRMASIVRQISIKGAVTSEFLAKRYGSLKNRGCRPSKYVGAYPEIGESVLENLKNMGWINEHPKDMLTEKGKTIVREIIEKVRE</sequence>
<dbReference type="EMBL" id="AL590450">
    <property type="protein sequence ID" value="CAD26072.1"/>
    <property type="molecule type" value="Genomic_DNA"/>
</dbReference>
<dbReference type="RefSeq" id="NP_586468.1">
    <property type="nucleotide sequence ID" value="NM_001042301.1"/>
</dbReference>
<dbReference type="PDB" id="7QEP">
    <property type="method" value="EM"/>
    <property type="resolution" value="2.70 A"/>
    <property type="chains" value="C9=1-137"/>
</dbReference>
<dbReference type="PDBsum" id="7QEP"/>
<dbReference type="EMDB" id="EMD-13936"/>
<dbReference type="SMR" id="Q8SQS8"/>
<dbReference type="FunCoup" id="Q8SQS8">
    <property type="interactions" value="198"/>
</dbReference>
<dbReference type="STRING" id="284813.Q8SQS8"/>
<dbReference type="GeneID" id="860122"/>
<dbReference type="KEGG" id="ecu:ECU11_1620i"/>
<dbReference type="VEuPathDB" id="MicrosporidiaDB:ECU11_1620i"/>
<dbReference type="HOGENOM" id="CLU_108559_1_1_1"/>
<dbReference type="InParanoid" id="Q8SQS8"/>
<dbReference type="OMA" id="WAPFVKT"/>
<dbReference type="OrthoDB" id="428974at2759"/>
<dbReference type="Proteomes" id="UP000000819">
    <property type="component" value="Chromosome XI"/>
</dbReference>
<dbReference type="GO" id="GO:0022627">
    <property type="term" value="C:cytosolic small ribosomal subunit"/>
    <property type="evidence" value="ECO:0007669"/>
    <property type="project" value="TreeGrafter"/>
</dbReference>
<dbReference type="GO" id="GO:0003723">
    <property type="term" value="F:RNA binding"/>
    <property type="evidence" value="ECO:0007669"/>
    <property type="project" value="TreeGrafter"/>
</dbReference>
<dbReference type="GO" id="GO:0003735">
    <property type="term" value="F:structural constituent of ribosome"/>
    <property type="evidence" value="ECO:0007669"/>
    <property type="project" value="InterPro"/>
</dbReference>
<dbReference type="GO" id="GO:0000028">
    <property type="term" value="P:ribosomal small subunit assembly"/>
    <property type="evidence" value="ECO:0007669"/>
    <property type="project" value="TreeGrafter"/>
</dbReference>
<dbReference type="GO" id="GO:0006412">
    <property type="term" value="P:translation"/>
    <property type="evidence" value="ECO:0007669"/>
    <property type="project" value="InterPro"/>
</dbReference>
<dbReference type="Gene3D" id="1.10.10.10">
    <property type="entry name" value="Winged helix-like DNA-binding domain superfamily/Winged helix DNA-binding domain"/>
    <property type="match status" value="1"/>
</dbReference>
<dbReference type="InterPro" id="IPR001266">
    <property type="entry name" value="Ribosomal_eS19"/>
</dbReference>
<dbReference type="InterPro" id="IPR036388">
    <property type="entry name" value="WH-like_DNA-bd_sf"/>
</dbReference>
<dbReference type="InterPro" id="IPR036390">
    <property type="entry name" value="WH_DNA-bd_sf"/>
</dbReference>
<dbReference type="PANTHER" id="PTHR11710">
    <property type="entry name" value="40S RIBOSOMAL PROTEIN S19"/>
    <property type="match status" value="1"/>
</dbReference>
<dbReference type="PANTHER" id="PTHR11710:SF0">
    <property type="entry name" value="40S RIBOSOMAL PROTEIN S19"/>
    <property type="match status" value="1"/>
</dbReference>
<dbReference type="Pfam" id="PF01090">
    <property type="entry name" value="Ribosomal_S19e"/>
    <property type="match status" value="1"/>
</dbReference>
<dbReference type="SMART" id="SM01413">
    <property type="entry name" value="Ribosomal_S19e"/>
    <property type="match status" value="1"/>
</dbReference>
<dbReference type="SUPFAM" id="SSF46785">
    <property type="entry name" value="Winged helix' DNA-binding domain"/>
    <property type="match status" value="1"/>
</dbReference>
<proteinExistence type="evidence at protein level"/>
<protein>
    <recommendedName>
        <fullName evidence="3">Small ribosomal subunit protein eS19</fullName>
    </recommendedName>
    <alternativeName>
        <fullName>40S ribosomal protein S19</fullName>
    </alternativeName>
</protein>
<name>RS19_ENCCU</name>
<keyword id="KW-0002">3D-structure</keyword>
<keyword id="KW-0963">Cytoplasm</keyword>
<keyword id="KW-1185">Reference proteome</keyword>
<keyword id="KW-0687">Ribonucleoprotein</keyword>
<keyword id="KW-0689">Ribosomal protein</keyword>
<feature type="chain" id="PRO_0000383138" description="Small ribosomal subunit protein eS19">
    <location>
        <begin position="1"/>
        <end position="137"/>
    </location>
</feature>
<accession>Q8SQS8</accession>
<gene>
    <name type="primary">RPS19</name>
    <name type="ordered locus">ECU11_1620i</name>
</gene>